<gene>
    <name type="primary">EIF5A1</name>
</gene>
<gene>
    <name type="primary">EIF5A2</name>
</gene>
<sequence>MSDEEHHFESKADAGASKTYPQQAGTIRKSGYIVIKGRPCKVVEVSTSKTGKHGHAKCHFVAIDIFNGKKLEDIVPSSHNCDVPHVNRTDYQLIDISEDGFVSLLTENGNTKDDLRLPTDDALLNQVKGGFEEGKDLVLSVMSAMGEEQICAVKDIGTKS</sequence>
<feature type="chain" id="PRO_0000142478" description="Eukaryotic translation initiation factor 5A-1/2">
    <location>
        <begin position="1"/>
        <end position="160"/>
    </location>
</feature>
<feature type="region of interest" description="Disordered" evidence="3">
    <location>
        <begin position="1"/>
        <end position="21"/>
    </location>
</feature>
<feature type="compositionally biased region" description="Basic and acidic residues" evidence="3">
    <location>
        <begin position="1"/>
        <end position="12"/>
    </location>
</feature>
<feature type="modified residue" description="Hypusine" evidence="2">
    <location>
        <position position="52"/>
    </location>
</feature>
<accession>P56333</accession>
<accession>P56334</accession>
<evidence type="ECO:0000250" key="1">
    <source>
        <dbReference type="UniProtKB" id="P23301"/>
    </source>
</evidence>
<evidence type="ECO:0000250" key="2">
    <source>
        <dbReference type="UniProtKB" id="Q9XI91"/>
    </source>
</evidence>
<evidence type="ECO:0000256" key="3">
    <source>
        <dbReference type="SAM" id="MobiDB-lite"/>
    </source>
</evidence>
<evidence type="ECO:0000305" key="4"/>
<protein>
    <recommendedName>
        <fullName>Eukaryotic translation initiation factor 5A-1/2</fullName>
        <shortName>eIF-5A-1/2</shortName>
    </recommendedName>
    <alternativeName>
        <fullName>eIF-4D</fullName>
    </alternativeName>
</protein>
<organism>
    <name type="scientific">Solanum tuberosum</name>
    <name type="common">Potato</name>
    <dbReference type="NCBI Taxonomy" id="4113"/>
    <lineage>
        <taxon>Eukaryota</taxon>
        <taxon>Viridiplantae</taxon>
        <taxon>Streptophyta</taxon>
        <taxon>Embryophyta</taxon>
        <taxon>Tracheophyta</taxon>
        <taxon>Spermatophyta</taxon>
        <taxon>Magnoliopsida</taxon>
        <taxon>eudicotyledons</taxon>
        <taxon>Gunneridae</taxon>
        <taxon>Pentapetalae</taxon>
        <taxon>asterids</taxon>
        <taxon>lamiids</taxon>
        <taxon>Solanales</taxon>
        <taxon>Solanaceae</taxon>
        <taxon>Solanoideae</taxon>
        <taxon>Solaneae</taxon>
        <taxon>Solanum</taxon>
    </lineage>
</organism>
<proteinExistence type="evidence at transcript level"/>
<name>IF5A1_SOLTU</name>
<dbReference type="EMBL" id="AB004827">
    <property type="protein sequence ID" value="BAA20880.1"/>
    <property type="molecule type" value="mRNA"/>
</dbReference>
<dbReference type="EMBL" id="AB004823">
    <property type="protein sequence ID" value="BAA20876.1"/>
    <property type="molecule type" value="mRNA"/>
</dbReference>
<dbReference type="RefSeq" id="NP_001275082.1">
    <property type="nucleotide sequence ID" value="NM_001288153.1"/>
</dbReference>
<dbReference type="SMR" id="P56333"/>
<dbReference type="FunCoup" id="P56333">
    <property type="interactions" value="1860"/>
</dbReference>
<dbReference type="STRING" id="4113.P56333"/>
<dbReference type="PaxDb" id="4113-PGSC0003DMT400020252"/>
<dbReference type="EnsemblPlants" id="PGSC0003DMT400020252">
    <property type="protein sequence ID" value="PGSC0003DMT400020252"/>
    <property type="gene ID" value="PGSC0003DMG400007830"/>
</dbReference>
<dbReference type="EnsemblPlants" id="RHC12H1G0334.2.1">
    <property type="protein sequence ID" value="RHC12H1G0334.2.1"/>
    <property type="gene ID" value="RHC12H1G0334.2"/>
</dbReference>
<dbReference type="GeneID" id="102594671"/>
<dbReference type="Gramene" id="PGSC0003DMT400020252">
    <property type="protein sequence ID" value="PGSC0003DMT400020252"/>
    <property type="gene ID" value="PGSC0003DMG400007830"/>
</dbReference>
<dbReference type="Gramene" id="RHC12H1G0334.2.1">
    <property type="protein sequence ID" value="RHC12H1G0334.2.1"/>
    <property type="gene ID" value="RHC12H1G0334.2"/>
</dbReference>
<dbReference type="KEGG" id="sot:102594671"/>
<dbReference type="eggNOG" id="KOG3271">
    <property type="taxonomic scope" value="Eukaryota"/>
</dbReference>
<dbReference type="HOGENOM" id="CLU_102600_1_0_1"/>
<dbReference type="InParanoid" id="P56333"/>
<dbReference type="OMA" id="KREDYQV"/>
<dbReference type="OrthoDB" id="9975114at2759"/>
<dbReference type="Proteomes" id="UP000011115">
    <property type="component" value="Unassembled WGS sequence"/>
</dbReference>
<dbReference type="GO" id="GO:0043022">
    <property type="term" value="F:ribosome binding"/>
    <property type="evidence" value="ECO:0007669"/>
    <property type="project" value="InterPro"/>
</dbReference>
<dbReference type="GO" id="GO:0003723">
    <property type="term" value="F:RNA binding"/>
    <property type="evidence" value="ECO:0007669"/>
    <property type="project" value="InterPro"/>
</dbReference>
<dbReference type="GO" id="GO:0003746">
    <property type="term" value="F:translation elongation factor activity"/>
    <property type="evidence" value="ECO:0000318"/>
    <property type="project" value="GO_Central"/>
</dbReference>
<dbReference type="GO" id="GO:0003743">
    <property type="term" value="F:translation initiation factor activity"/>
    <property type="evidence" value="ECO:0007669"/>
    <property type="project" value="UniProtKB-KW"/>
</dbReference>
<dbReference type="GO" id="GO:0045901">
    <property type="term" value="P:positive regulation of translational elongation"/>
    <property type="evidence" value="ECO:0007669"/>
    <property type="project" value="InterPro"/>
</dbReference>
<dbReference type="GO" id="GO:0045905">
    <property type="term" value="P:positive regulation of translational termination"/>
    <property type="evidence" value="ECO:0007669"/>
    <property type="project" value="InterPro"/>
</dbReference>
<dbReference type="GO" id="GO:0006414">
    <property type="term" value="P:translational elongation"/>
    <property type="evidence" value="ECO:0000318"/>
    <property type="project" value="GO_Central"/>
</dbReference>
<dbReference type="CDD" id="cd04468">
    <property type="entry name" value="S1_eIF5A"/>
    <property type="match status" value="1"/>
</dbReference>
<dbReference type="FunFam" id="2.30.30.30:FF:000012">
    <property type="entry name" value="Eukaryotic translation initiation factor 5A"/>
    <property type="match status" value="1"/>
</dbReference>
<dbReference type="FunFam" id="2.40.50.140:FF:000034">
    <property type="entry name" value="Eukaryotic translation initiation factor 5A"/>
    <property type="match status" value="1"/>
</dbReference>
<dbReference type="Gene3D" id="2.30.30.30">
    <property type="match status" value="1"/>
</dbReference>
<dbReference type="Gene3D" id="2.40.50.140">
    <property type="entry name" value="Nucleic acid-binding proteins"/>
    <property type="match status" value="1"/>
</dbReference>
<dbReference type="InterPro" id="IPR001884">
    <property type="entry name" value="IF5A-like"/>
</dbReference>
<dbReference type="InterPro" id="IPR048670">
    <property type="entry name" value="IF5A-like_N"/>
</dbReference>
<dbReference type="InterPro" id="IPR012340">
    <property type="entry name" value="NA-bd_OB-fold"/>
</dbReference>
<dbReference type="InterPro" id="IPR014722">
    <property type="entry name" value="Rib_uL2_dom2"/>
</dbReference>
<dbReference type="InterPro" id="IPR019769">
    <property type="entry name" value="Trans_elong_IF5A_hypusine_site"/>
</dbReference>
<dbReference type="InterPro" id="IPR020189">
    <property type="entry name" value="Transl_elong_IF5A_C"/>
</dbReference>
<dbReference type="InterPro" id="IPR008991">
    <property type="entry name" value="Translation_prot_SH3-like_sf"/>
</dbReference>
<dbReference type="NCBIfam" id="TIGR00037">
    <property type="entry name" value="eIF_5A"/>
    <property type="match status" value="1"/>
</dbReference>
<dbReference type="PANTHER" id="PTHR11673">
    <property type="entry name" value="TRANSLATION INITIATION FACTOR 5A FAMILY MEMBER"/>
    <property type="match status" value="1"/>
</dbReference>
<dbReference type="Pfam" id="PF01287">
    <property type="entry name" value="eIF-5a"/>
    <property type="match status" value="1"/>
</dbReference>
<dbReference type="Pfam" id="PF21485">
    <property type="entry name" value="IF5A-like_N"/>
    <property type="match status" value="1"/>
</dbReference>
<dbReference type="PIRSF" id="PIRSF003025">
    <property type="entry name" value="eIF5A"/>
    <property type="match status" value="1"/>
</dbReference>
<dbReference type="SMART" id="SM01376">
    <property type="entry name" value="eIF-5a"/>
    <property type="match status" value="1"/>
</dbReference>
<dbReference type="SUPFAM" id="SSF50249">
    <property type="entry name" value="Nucleic acid-binding proteins"/>
    <property type="match status" value="1"/>
</dbReference>
<dbReference type="SUPFAM" id="SSF50104">
    <property type="entry name" value="Translation proteins SH3-like domain"/>
    <property type="match status" value="1"/>
</dbReference>
<dbReference type="PROSITE" id="PS00302">
    <property type="entry name" value="IF5A_HYPUSINE"/>
    <property type="match status" value="1"/>
</dbReference>
<keyword id="KW-0385">Hypusine</keyword>
<keyword id="KW-0396">Initiation factor</keyword>
<keyword id="KW-0648">Protein biosynthesis</keyword>
<keyword id="KW-1185">Reference proteome</keyword>
<comment type="function">
    <text evidence="1">Translation factor that promotes translation elongation and termination, particularly upon ribosome stalling at specific amino acid sequence contexts (By similarity). Binds between the exit (E) and peptidyl (P) site of the ribosome and promotes rescue of stalled ribosome: specifically required for efficient translation of polyproline-containing peptides as well as other motifs that stall the ribosome (By similarity). Acts as a ribosome quality control (RQC) cofactor by joining the RQC complex to facilitate peptidyl transfer during CAT tailing step (By similarity).</text>
</comment>
<comment type="PTM">
    <text evidence="2">Lys-52 undergoes hypusination, a unique post-translational modification that consists in the addition of a butylamino group from spermidine to lysine side chain, leading to the formation of the unusual amino acid hypusine. eIF-5As are the only known proteins to undergo this modification, which is essential for their function.</text>
</comment>
<comment type="similarity">
    <text evidence="4">Belongs to the eIF-5A family.</text>
</comment>
<reference key="1">
    <citation type="online journal article" date="1997" name="Plant Gene Register">
        <title>Nucleotide sequence of five cDNAs encoding eukaryotic translation initiation factor 5A (eIF-5A) from potato.</title>
        <authorList>
            <person name="In J.G."/>
            <person name="Fujino K."/>
            <person name="Kikuta Y."/>
        </authorList>
        <locator>PGR97-147</locator>
    </citation>
    <scope>NUCLEOTIDE SEQUENCE [MRNA]</scope>
    <source>
        <strain>cv. Irish Cobbler</strain>
    </source>
</reference>
<reference key="2">
    <citation type="journal article" date="2011" name="Nature">
        <title>Genome sequence and analysis of the tuber crop potato.</title>
        <authorList>
            <consortium name="The Potato Genome Sequencing Consortium"/>
        </authorList>
    </citation>
    <scope>NUCLEOTIDE SEQUENCE [LARGE SCALE GENOMIC DNA]</scope>
    <source>
        <strain>cv. DM1-3 516 R44</strain>
    </source>
</reference>